<name>RRP3_PYRYE</name>
<protein>
    <recommendedName>
        <fullName evidence="1">Small ribosomal subunit protein cS23</fullName>
    </recommendedName>
    <alternativeName>
        <fullName>30S ribosomal protein 3, chloroplastic</fullName>
        <shortName evidence="1">PSRP-3</shortName>
    </alternativeName>
</protein>
<reference key="1">
    <citation type="submission" date="2003-11" db="EMBL/GenBank/DDBJ databases">
        <title>Whole genome sequence of Porphyra yezoensis chloroplast.</title>
        <authorList>
            <person name="Kunimoto M."/>
            <person name="Morishima K."/>
            <person name="Yoshikawa M."/>
            <person name="Fukuda S."/>
            <person name="Kobayashi T."/>
            <person name="Kobayashi M."/>
            <person name="Okazaki T."/>
            <person name="Ohara I."/>
            <person name="Nakayama I."/>
        </authorList>
    </citation>
    <scope>NUCLEOTIDE SEQUENCE [LARGE SCALE GENOMIC DNA]</scope>
    <source>
        <strain>U-51</strain>
    </source>
</reference>
<organism>
    <name type="scientific">Pyropia yezoensis</name>
    <name type="common">Susabi-nori</name>
    <name type="synonym">Porphyra yezoensis</name>
    <dbReference type="NCBI Taxonomy" id="2788"/>
    <lineage>
        <taxon>Eukaryota</taxon>
        <taxon>Rhodophyta</taxon>
        <taxon>Bangiophyceae</taxon>
        <taxon>Bangiales</taxon>
        <taxon>Bangiaceae</taxon>
        <taxon>Pyropia</taxon>
    </lineage>
</organism>
<keyword id="KW-0150">Chloroplast</keyword>
<keyword id="KW-0934">Plastid</keyword>
<keyword id="KW-0687">Ribonucleoprotein</keyword>
<keyword id="KW-0689">Ribosomal protein</keyword>
<comment type="function">
    <text evidence="1">Probably a ribosomal protein or a ribosome-associated protein.</text>
</comment>
<comment type="subunit">
    <text evidence="1">Part of the 30S ribosomal subunit.</text>
</comment>
<comment type="subcellular location">
    <subcellularLocation>
        <location>Plastid</location>
        <location>Chloroplast</location>
    </subcellularLocation>
</comment>
<comment type="similarity">
    <text evidence="1">Belongs to the chloroplast-specific ribosomal protein cS23 family.</text>
</comment>
<dbReference type="EMBL" id="AP006715">
    <property type="protein sequence ID" value="BAE92475.1"/>
    <property type="molecule type" value="Genomic_DNA"/>
</dbReference>
<dbReference type="RefSeq" id="YP_537032.1">
    <property type="nucleotide sequence ID" value="NC_007932.1"/>
</dbReference>
<dbReference type="SMR" id="Q1XDD6"/>
<dbReference type="GeneID" id="3978866"/>
<dbReference type="GO" id="GO:0009507">
    <property type="term" value="C:chloroplast"/>
    <property type="evidence" value="ECO:0007669"/>
    <property type="project" value="UniProtKB-SubCell"/>
</dbReference>
<dbReference type="GO" id="GO:1990904">
    <property type="term" value="C:ribonucleoprotein complex"/>
    <property type="evidence" value="ECO:0007669"/>
    <property type="project" value="UniProtKB-KW"/>
</dbReference>
<dbReference type="GO" id="GO:0005840">
    <property type="term" value="C:ribosome"/>
    <property type="evidence" value="ECO:0007669"/>
    <property type="project" value="UniProtKB-KW"/>
</dbReference>
<dbReference type="GO" id="GO:0003735">
    <property type="term" value="F:structural constituent of ribosome"/>
    <property type="evidence" value="ECO:0007669"/>
    <property type="project" value="InterPro"/>
</dbReference>
<dbReference type="GO" id="GO:0006412">
    <property type="term" value="P:translation"/>
    <property type="evidence" value="ECO:0007669"/>
    <property type="project" value="UniProtKB-UniRule"/>
</dbReference>
<dbReference type="Gene3D" id="3.30.390.140">
    <property type="match status" value="1"/>
</dbReference>
<dbReference type="HAMAP" id="MF_00619">
    <property type="entry name" value="Ribosomal_plastid_cS23"/>
    <property type="match status" value="1"/>
</dbReference>
<dbReference type="InterPro" id="IPR038447">
    <property type="entry name" value="PSRP-3/Ycf65_sf"/>
</dbReference>
<dbReference type="InterPro" id="IPR006924">
    <property type="entry name" value="Ribosomal_PSRP3/Ycf65"/>
</dbReference>
<dbReference type="NCBIfam" id="NF002740">
    <property type="entry name" value="PRK02724.1"/>
    <property type="match status" value="1"/>
</dbReference>
<dbReference type="PANTHER" id="PTHR35108">
    <property type="entry name" value="30S RIBOSOMAL PROTEIN 3, CHLOROPLASTIC"/>
    <property type="match status" value="1"/>
</dbReference>
<dbReference type="PANTHER" id="PTHR35108:SF1">
    <property type="entry name" value="OS04G0461100 PROTEIN"/>
    <property type="match status" value="1"/>
</dbReference>
<dbReference type="Pfam" id="PF04839">
    <property type="entry name" value="PSRP-3_Ycf65"/>
    <property type="match status" value="1"/>
</dbReference>
<feature type="chain" id="PRO_0000276563" description="Small ribosomal subunit protein cS23">
    <location>
        <begin position="1"/>
        <end position="102"/>
    </location>
</feature>
<sequence length="102" mass="12047">MEIKNLSKFTLKVLWLENNIAIAIDQIVGNGTSPLTSYFFWPRNDAWEELKAELESKPWIAERDRIELLNKTTEVINYWQEEGKKHSLAKAQARFPRIYFFG</sequence>
<evidence type="ECO:0000255" key="1">
    <source>
        <dbReference type="HAMAP-Rule" id="MF_00619"/>
    </source>
</evidence>
<proteinExistence type="inferred from homology"/>
<geneLocation type="chloroplast"/>
<gene>
    <name evidence="1" type="primary">ycf65</name>
</gene>
<accession>Q1XDD6</accession>